<feature type="chain" id="PRO_0000219968" description="PqqA binding protein">
    <location>
        <begin position="1"/>
        <end position="98"/>
    </location>
</feature>
<sequence>MKHEIKHDPAFRALTPKWHHGYRFQYEPAQKAHVVLYPEGMIKLNDSASLIGGLIDGERTIAAIIAELQREFPNIPELGMDVDDFMKVAKEKYWIDLV</sequence>
<organism>
    <name type="scientific">Pseudomonas syringae pv. tomato (strain ATCC BAA-871 / DC3000)</name>
    <dbReference type="NCBI Taxonomy" id="223283"/>
    <lineage>
        <taxon>Bacteria</taxon>
        <taxon>Pseudomonadati</taxon>
        <taxon>Pseudomonadota</taxon>
        <taxon>Gammaproteobacteria</taxon>
        <taxon>Pseudomonadales</taxon>
        <taxon>Pseudomonadaceae</taxon>
        <taxon>Pseudomonas</taxon>
    </lineage>
</organism>
<name>PQQD_PSESM</name>
<dbReference type="EMBL" id="AE016853">
    <property type="protein sequence ID" value="AAO54053.1"/>
    <property type="molecule type" value="Genomic_DNA"/>
</dbReference>
<dbReference type="RefSeq" id="NP_790358.1">
    <property type="nucleotide sequence ID" value="NC_004578.1"/>
</dbReference>
<dbReference type="RefSeq" id="WP_005614032.1">
    <property type="nucleotide sequence ID" value="NC_004578.1"/>
</dbReference>
<dbReference type="SMR" id="Q88A83"/>
<dbReference type="STRING" id="223283.PSPTO_0510"/>
<dbReference type="GeneID" id="1182119"/>
<dbReference type="KEGG" id="pst:PSPTO_0510"/>
<dbReference type="PATRIC" id="fig|223283.9.peg.525"/>
<dbReference type="eggNOG" id="ENOG5032Z81">
    <property type="taxonomic scope" value="Bacteria"/>
</dbReference>
<dbReference type="HOGENOM" id="CLU_163864_2_1_6"/>
<dbReference type="OrthoDB" id="7356791at2"/>
<dbReference type="PhylomeDB" id="Q88A83"/>
<dbReference type="UniPathway" id="UPA00539"/>
<dbReference type="Proteomes" id="UP000002515">
    <property type="component" value="Chromosome"/>
</dbReference>
<dbReference type="GO" id="GO:0048038">
    <property type="term" value="F:quinone binding"/>
    <property type="evidence" value="ECO:0007669"/>
    <property type="project" value="InterPro"/>
</dbReference>
<dbReference type="GO" id="GO:0018189">
    <property type="term" value="P:pyrroloquinoline quinone biosynthetic process"/>
    <property type="evidence" value="ECO:0007669"/>
    <property type="project" value="UniProtKB-UniRule"/>
</dbReference>
<dbReference type="Gene3D" id="1.10.10.1150">
    <property type="entry name" value="Coenzyme PQQ synthesis protein D (PqqD)"/>
    <property type="match status" value="1"/>
</dbReference>
<dbReference type="HAMAP" id="MF_00655">
    <property type="entry name" value="PQQ_syn_PqqD"/>
    <property type="match status" value="1"/>
</dbReference>
<dbReference type="InterPro" id="IPR008792">
    <property type="entry name" value="PQQD"/>
</dbReference>
<dbReference type="InterPro" id="IPR022479">
    <property type="entry name" value="PqqD_bac"/>
</dbReference>
<dbReference type="InterPro" id="IPR041881">
    <property type="entry name" value="PqqD_sf"/>
</dbReference>
<dbReference type="NCBIfam" id="TIGR03859">
    <property type="entry name" value="PQQ_PqqD"/>
    <property type="match status" value="1"/>
</dbReference>
<dbReference type="NCBIfam" id="NF002535">
    <property type="entry name" value="PRK02079.1"/>
    <property type="match status" value="1"/>
</dbReference>
<dbReference type="Pfam" id="PF05402">
    <property type="entry name" value="PqqD"/>
    <property type="match status" value="1"/>
</dbReference>
<comment type="function">
    <text evidence="1">Functions as a PqqA binding protein and presents PqqA to PqqE, in the pyrroloquinoline quinone (PQQ) biosynthetic pathway.</text>
</comment>
<comment type="pathway">
    <text evidence="1">Cofactor biosynthesis; pyrroloquinoline quinone biosynthesis.</text>
</comment>
<comment type="subunit">
    <text evidence="1">Monomer. Interacts with PqqE.</text>
</comment>
<comment type="similarity">
    <text evidence="1">Belongs to the PqqD family.</text>
</comment>
<evidence type="ECO:0000255" key="1">
    <source>
        <dbReference type="HAMAP-Rule" id="MF_00655"/>
    </source>
</evidence>
<reference key="1">
    <citation type="journal article" date="2003" name="Proc. Natl. Acad. Sci. U.S.A.">
        <title>The complete genome sequence of the Arabidopsis and tomato pathogen Pseudomonas syringae pv. tomato DC3000.</title>
        <authorList>
            <person name="Buell C.R."/>
            <person name="Joardar V."/>
            <person name="Lindeberg M."/>
            <person name="Selengut J."/>
            <person name="Paulsen I.T."/>
            <person name="Gwinn M.L."/>
            <person name="Dodson R.J."/>
            <person name="DeBoy R.T."/>
            <person name="Durkin A.S."/>
            <person name="Kolonay J.F."/>
            <person name="Madupu R."/>
            <person name="Daugherty S.C."/>
            <person name="Brinkac L.M."/>
            <person name="Beanan M.J."/>
            <person name="Haft D.H."/>
            <person name="Nelson W.C."/>
            <person name="Davidsen T.M."/>
            <person name="Zafar N."/>
            <person name="Zhou L."/>
            <person name="Liu J."/>
            <person name="Yuan Q."/>
            <person name="Khouri H.M."/>
            <person name="Fedorova N.B."/>
            <person name="Tran B."/>
            <person name="Russell D."/>
            <person name="Berry K.J."/>
            <person name="Utterback T.R."/>
            <person name="Van Aken S.E."/>
            <person name="Feldblyum T.V."/>
            <person name="D'Ascenzo M."/>
            <person name="Deng W.-L."/>
            <person name="Ramos A.R."/>
            <person name="Alfano J.R."/>
            <person name="Cartinhour S."/>
            <person name="Chatterjee A.K."/>
            <person name="Delaney T.P."/>
            <person name="Lazarowitz S.G."/>
            <person name="Martin G.B."/>
            <person name="Schneider D.J."/>
            <person name="Tang X."/>
            <person name="Bender C.L."/>
            <person name="White O."/>
            <person name="Fraser C.M."/>
            <person name="Collmer A."/>
        </authorList>
    </citation>
    <scope>NUCLEOTIDE SEQUENCE [LARGE SCALE GENOMIC DNA]</scope>
    <source>
        <strain>ATCC BAA-871 / DC3000</strain>
    </source>
</reference>
<keyword id="KW-0884">PQQ biosynthesis</keyword>
<keyword id="KW-1185">Reference proteome</keyword>
<gene>
    <name evidence="1" type="primary">pqqD</name>
    <name type="ordered locus">PSPTO_0510</name>
</gene>
<accession>Q88A83</accession>
<protein>
    <recommendedName>
        <fullName evidence="1">PqqA binding protein</fullName>
    </recommendedName>
    <alternativeName>
        <fullName evidence="1">Coenzyme PQQ synthesis protein D</fullName>
    </alternativeName>
    <alternativeName>
        <fullName evidence="1">Pyrroloquinoline quinone biosynthesis protein D</fullName>
    </alternativeName>
</protein>
<proteinExistence type="inferred from homology"/>